<gene>
    <name type="primary">lpxB</name>
    <name type="ordered locus">CTA_0446</name>
</gene>
<name>LPXB_CHLTA</name>
<dbReference type="EC" id="2.4.1.182"/>
<dbReference type="EMBL" id="CP000051">
    <property type="protein sequence ID" value="AAX50680.1"/>
    <property type="molecule type" value="Genomic_DNA"/>
</dbReference>
<dbReference type="RefSeq" id="WP_009871763.1">
    <property type="nucleotide sequence ID" value="NC_007429.1"/>
</dbReference>
<dbReference type="SMR" id="Q3KLU2"/>
<dbReference type="CAZy" id="GT19">
    <property type="family name" value="Glycosyltransferase Family 19"/>
</dbReference>
<dbReference type="KEGG" id="cta:CTA_0446"/>
<dbReference type="HOGENOM" id="CLU_430672_0_0_0"/>
<dbReference type="UniPathway" id="UPA00973"/>
<dbReference type="Proteomes" id="UP000002532">
    <property type="component" value="Chromosome"/>
</dbReference>
<dbReference type="GO" id="GO:0016020">
    <property type="term" value="C:membrane"/>
    <property type="evidence" value="ECO:0007669"/>
    <property type="project" value="GOC"/>
</dbReference>
<dbReference type="GO" id="GO:0008915">
    <property type="term" value="F:lipid-A-disaccharide synthase activity"/>
    <property type="evidence" value="ECO:0007669"/>
    <property type="project" value="UniProtKB-UniRule"/>
</dbReference>
<dbReference type="GO" id="GO:0005543">
    <property type="term" value="F:phospholipid binding"/>
    <property type="evidence" value="ECO:0007669"/>
    <property type="project" value="TreeGrafter"/>
</dbReference>
<dbReference type="GO" id="GO:0009245">
    <property type="term" value="P:lipid A biosynthetic process"/>
    <property type="evidence" value="ECO:0007669"/>
    <property type="project" value="UniProtKB-UniRule"/>
</dbReference>
<dbReference type="Gene3D" id="3.40.50.2000">
    <property type="entry name" value="Glycogen Phosphorylase B"/>
    <property type="match status" value="1"/>
</dbReference>
<dbReference type="HAMAP" id="MF_00392">
    <property type="entry name" value="LpxB"/>
    <property type="match status" value="1"/>
</dbReference>
<dbReference type="InterPro" id="IPR003835">
    <property type="entry name" value="Glyco_trans_19"/>
</dbReference>
<dbReference type="InterPro" id="IPR011499">
    <property type="entry name" value="Lipid_A_biosynth_N"/>
</dbReference>
<dbReference type="NCBIfam" id="TIGR00215">
    <property type="entry name" value="lpxB"/>
    <property type="match status" value="1"/>
</dbReference>
<dbReference type="NCBIfam" id="NF002173">
    <property type="entry name" value="PRK01021.1"/>
    <property type="match status" value="1"/>
</dbReference>
<dbReference type="PANTHER" id="PTHR30372">
    <property type="entry name" value="LIPID-A-DISACCHARIDE SYNTHASE"/>
    <property type="match status" value="1"/>
</dbReference>
<dbReference type="PANTHER" id="PTHR30372:SF4">
    <property type="entry name" value="LIPID-A-DISACCHARIDE SYNTHASE, MITOCHONDRIAL-RELATED"/>
    <property type="match status" value="1"/>
</dbReference>
<dbReference type="Pfam" id="PF07578">
    <property type="entry name" value="LAB_N"/>
    <property type="match status" value="2"/>
</dbReference>
<dbReference type="Pfam" id="PF02684">
    <property type="entry name" value="LpxB"/>
    <property type="match status" value="1"/>
</dbReference>
<dbReference type="SMART" id="SM01259">
    <property type="entry name" value="LAB_N"/>
    <property type="match status" value="2"/>
</dbReference>
<dbReference type="SUPFAM" id="SSF53756">
    <property type="entry name" value="UDP-Glycosyltransferase/glycogen phosphorylase"/>
    <property type="match status" value="1"/>
</dbReference>
<protein>
    <recommendedName>
        <fullName>Lipid-A-disaccharide synthase</fullName>
        <ecNumber>2.4.1.182</ecNumber>
    </recommendedName>
</protein>
<keyword id="KW-0328">Glycosyltransferase</keyword>
<keyword id="KW-0441">Lipid A biosynthesis</keyword>
<keyword id="KW-0444">Lipid biosynthesis</keyword>
<keyword id="KW-0443">Lipid metabolism</keyword>
<keyword id="KW-0808">Transferase</keyword>
<sequence length="607" mass="69030">MFPQKITLWLYPLGLFANLFFGTAFCVQWSLTRKKGYSVVPKIFWYLSGTGAVFMICHGFIQSQYPIALLHSFNLIIYFRNLNIASLNPLPVSKIASLLVSVATAITVSFAIGTRYLPHMTWMASPNILHLNLPEASLSWQLIGCIGLTIFSLRFFIQWFYLEYKNQSALPAPFWKASLLGGSICLLYFLRTGDLVNVLCYGCGLFPSLANLRIASREAFRKPFSNSCFISAGEHSGDTLGGNLLKEMHAKYPDIHCFGVGGPQMRAQNFHALFAMEKFQVSGFWEVLLALPKLWYRYQLLYRNILKTNPRTVICIDFPDFHFLLIKKLRSRGYKGKIVHYVCPSIWAWRPSRKTVLEKYLDLLLLILPFEQNLFKDSALRTVYLGHPLSETIKSFSPNLNWKDQLHLPTDKPFIAAFPGSRRSDILRNLTIQVQAFQASSLASTHHLLVSSANPEYDHLILEVLQQNRCLHSHIVPSQFRYELMRECDFALAKCGTIVLETALNLTPTIVTCQLRPLDTFLAKYIFNIILPAYSLPNIILGRTIFPEFIGGKKDFQYEDVAAALNILKTSQAQEKQKDSCRDVYQAINESASSMKECLSLIFETAS</sequence>
<organism>
    <name type="scientific">Chlamydia trachomatis serovar A (strain ATCC VR-571B / DSM 19440 / HAR-13)</name>
    <dbReference type="NCBI Taxonomy" id="315277"/>
    <lineage>
        <taxon>Bacteria</taxon>
        <taxon>Pseudomonadati</taxon>
        <taxon>Chlamydiota</taxon>
        <taxon>Chlamydiia</taxon>
        <taxon>Chlamydiales</taxon>
        <taxon>Chlamydiaceae</taxon>
        <taxon>Chlamydia/Chlamydophila group</taxon>
        <taxon>Chlamydia</taxon>
    </lineage>
</organism>
<evidence type="ECO:0000250" key="1"/>
<evidence type="ECO:0000305" key="2"/>
<reference key="1">
    <citation type="journal article" date="2005" name="Infect. Immun.">
        <title>Comparative genomic analysis of Chlamydia trachomatis oculotropic and genitotropic strains.</title>
        <authorList>
            <person name="Carlson J.H."/>
            <person name="Porcella S.F."/>
            <person name="McClarty G."/>
            <person name="Caldwell H.D."/>
        </authorList>
    </citation>
    <scope>NUCLEOTIDE SEQUENCE [LARGE SCALE GENOMIC DNA]</scope>
    <source>
        <strain>ATCC VR-571B / DSM 19440 / HAR-13</strain>
    </source>
</reference>
<comment type="function">
    <text evidence="1">Condensation of UDP-2,3-diacylglucosamine and 2,3-diacylglucosamine-1-phosphate to form lipid A disaccharide, a precursor of lipid A, a phosphorylated glycolipid that anchors the lipopolysaccharide to the outer membrane of the cell.</text>
</comment>
<comment type="catalytic activity">
    <reaction>
        <text>a lipid X + a UDP-2-N,3-O-bis[(3R)-3-hydroxyacyl]-alpha-D-glucosamine = a lipid A disaccharide + UDP + H(+)</text>
        <dbReference type="Rhea" id="RHEA:67828"/>
        <dbReference type="ChEBI" id="CHEBI:15378"/>
        <dbReference type="ChEBI" id="CHEBI:58223"/>
        <dbReference type="ChEBI" id="CHEBI:137748"/>
        <dbReference type="ChEBI" id="CHEBI:176338"/>
        <dbReference type="ChEBI" id="CHEBI:176343"/>
        <dbReference type="EC" id="2.4.1.182"/>
    </reaction>
</comment>
<comment type="pathway">
    <text>Bacterial outer membrane biogenesis; LPS lipid A biosynthesis.</text>
</comment>
<comment type="similarity">
    <text evidence="2">In the C-terminal section; belongs to the LpxB family.</text>
</comment>
<feature type="chain" id="PRO_0000255171" description="Lipid-A-disaccharide synthase">
    <location>
        <begin position="1"/>
        <end position="607"/>
    </location>
</feature>
<feature type="region of interest" description="Unknown">
    <location>
        <begin position="1"/>
        <end position="224"/>
    </location>
</feature>
<feature type="region of interest" description="Lipid-A-disaccharide synthase">
    <location>
        <begin position="225"/>
        <end position="607"/>
    </location>
</feature>
<proteinExistence type="inferred from homology"/>
<accession>Q3KLU2</accession>